<comment type="function">
    <text evidence="2 3">Mu-conotoxins block voltage-gated sodium channels (PubMed:35940316). This peptide inhibits the cardiac sodium channel hNav1.5/SCN5A (33% inhibition at 200 nM, 50% at 400 nM, and 55% at 600 nM) (PubMed:35940316). Does not interfere with the voltage-dependence of activation, but affects the voltage-dependence of inactivation of hNav1.5 (PubMed:35940316). In vivo, intracranial injection into 9-day-old mice causes transient symptoms, including extension of the body and clockwise and counter-clockwise turns, that last 3 to 4 minutes (PubMed:16297502). Intracranial injection into 16-day-old mice, causes transient symptoms, including agitated breathing and occasional turning followed by scratching and grooming behavior, that last for 15-19 minutes (PubMed:16297502).</text>
</comment>
<comment type="subcellular location">
    <subcellularLocation>
        <location evidence="2">Secreted</location>
    </subcellularLocation>
</comment>
<comment type="alternative products">
    <event type="alternative splicing"/>
    <isoform>
        <id>P84845-1</id>
        <name>sr5a</name>
        <name>Sr5.1</name>
        <sequence type="displayed"/>
    </isoform>
    <isoform>
        <id>P84845-2</id>
        <name>Sr5.2</name>
        <sequence type="described" ref="VSP_038848"/>
    </isoform>
</comment>
<comment type="tissue specificity">
    <text evidence="8">Expressed by the venom duct.</text>
</comment>
<comment type="domain">
    <text evidence="7">The cysteine framework is V (CC-CC).</text>
</comment>
<comment type="mass spectrometry"/>
<comment type="mass spectrometry"/>
<comment type="miscellaneous">
    <text evidence="3">Negative results: shows very weak inhibition of neuronal sodium channels rNav1.6/SCN8A (14% inhibition at 200 nM), and rNav1.7/SCN9A (7%).</text>
</comment>
<comment type="similarity">
    <text evidence="2">Belongs to the conotoxin T superfamily.</text>
</comment>
<organism>
    <name type="scientific">Conus spurius</name>
    <name type="common">Alphabet cone</name>
    <dbReference type="NCBI Taxonomy" id="192919"/>
    <lineage>
        <taxon>Eukaryota</taxon>
        <taxon>Metazoa</taxon>
        <taxon>Spiralia</taxon>
        <taxon>Lophotrochozoa</taxon>
        <taxon>Mollusca</taxon>
        <taxon>Gastropoda</taxon>
        <taxon>Caenogastropoda</taxon>
        <taxon>Neogastropoda</taxon>
        <taxon>Conoidea</taxon>
        <taxon>Conidae</taxon>
        <taxon>Conus</taxon>
        <taxon>Lindaconus</taxon>
    </lineage>
</organism>
<proteinExistence type="evidence at protein level"/>
<protein>
    <recommendedName>
        <fullName evidence="6">Mu-conotoxin SrVA</fullName>
    </recommendedName>
    <alternativeName>
        <fullName evidence="4 5">Conotoxin sr5a</fullName>
    </alternativeName>
    <alternativeName>
        <fullName evidence="5">Sr5.1</fullName>
    </alternativeName>
    <alternativeName>
        <fullName evidence="5">Sr5.2</fullName>
    </alternativeName>
    <alternativeName>
        <fullName evidence="5">Sr5.3</fullName>
    </alternativeName>
</protein>
<keyword id="KW-0025">Alternative splicing</keyword>
<keyword id="KW-0165">Cleavage on pair of basic residues</keyword>
<keyword id="KW-0903">Direct protein sequencing</keyword>
<keyword id="KW-1015">Disulfide bond</keyword>
<keyword id="KW-0872">Ion channel impairing toxin</keyword>
<keyword id="KW-0528">Neurotoxin</keyword>
<keyword id="KW-0964">Secreted</keyword>
<keyword id="KW-0732">Signal</keyword>
<keyword id="KW-0800">Toxin</keyword>
<keyword id="KW-0738">Voltage-gated sodium channel impairing toxin</keyword>
<feature type="signal peptide" evidence="1">
    <location>
        <begin position="1"/>
        <end position="22"/>
    </location>
</feature>
<feature type="propeptide" id="PRO_0000392714" evidence="7">
    <location>
        <begin position="23"/>
        <end position="44"/>
    </location>
</feature>
<feature type="peptide" id="PRO_0000235846" description="Mu-conotoxin SrVA" evidence="2">
    <location>
        <begin position="47"/>
        <end position="59"/>
    </location>
</feature>
<feature type="disulfide bond" evidence="2">
    <location>
        <begin position="51"/>
        <end position="58"/>
    </location>
</feature>
<feature type="disulfide bond" evidence="2">
    <location>
        <begin position="52"/>
        <end position="59"/>
    </location>
</feature>
<feature type="splice variant" id="VSP_038848" description="In isoform Sr5.2." evidence="5">
    <location>
        <begin position="22"/>
        <end position="36"/>
    </location>
</feature>
<feature type="sequence variant" description="In Sr5.3.">
    <original>F</original>
    <variation>L</variation>
    <location>
        <position position="7"/>
    </location>
</feature>
<accession>P84845</accession>
<accession>C0KYC0</accession>
<accession>C0KYC1</accession>
<accession>C0KYC2</accession>
<dbReference type="EMBL" id="FJ646602">
    <property type="protein sequence ID" value="ACN22840.1"/>
    <property type="molecule type" value="mRNA"/>
</dbReference>
<dbReference type="EMBL" id="FJ646603">
    <property type="protein sequence ID" value="ACN22841.1"/>
    <property type="molecule type" value="mRNA"/>
</dbReference>
<dbReference type="EMBL" id="FJ646604">
    <property type="protein sequence ID" value="ACN22842.1"/>
    <property type="molecule type" value="mRNA"/>
</dbReference>
<dbReference type="ConoServer" id="10500">
    <property type="toxin name" value="SrVA"/>
</dbReference>
<dbReference type="ConoServer" id="1618">
    <property type="toxin name" value="SrVA"/>
</dbReference>
<dbReference type="ConoServer" id="3699">
    <property type="toxin name" value="SrVA precursor"/>
</dbReference>
<dbReference type="ConoServer" id="3700">
    <property type="toxin name" value="SrVA precursor"/>
</dbReference>
<dbReference type="ConoServer" id="3782">
    <property type="toxin name" value="SrVA precursor"/>
</dbReference>
<dbReference type="GO" id="GO:0005576">
    <property type="term" value="C:extracellular region"/>
    <property type="evidence" value="ECO:0000314"/>
    <property type="project" value="UniProtKB"/>
</dbReference>
<dbReference type="GO" id="GO:0017080">
    <property type="term" value="F:sodium channel regulator activity"/>
    <property type="evidence" value="ECO:0007669"/>
    <property type="project" value="UniProtKB-KW"/>
</dbReference>
<dbReference type="GO" id="GO:0090729">
    <property type="term" value="F:toxin activity"/>
    <property type="evidence" value="ECO:0000314"/>
    <property type="project" value="UniProtKB"/>
</dbReference>
<dbReference type="InterPro" id="IPR031565">
    <property type="entry name" value="T-conotoxin"/>
</dbReference>
<dbReference type="Pfam" id="PF16981">
    <property type="entry name" value="Chi-conotoxin"/>
    <property type="match status" value="1"/>
</dbReference>
<reference key="1">
    <citation type="journal article" date="2009" name="Peptides">
        <title>Identification, by RT-PCR, of four novel T-1-superfamily conotoxins from the vermivorous snail Conus spurius from the Gulf of Mexico.</title>
        <authorList>
            <person name="Zamora-Bustillos R."/>
            <person name="Aguilar M.B."/>
            <person name="Falcon A."/>
            <person name="Heimer de la Cotera E.P."/>
        </authorList>
    </citation>
    <scope>NUCLEOTIDE SEQUENCE [MRNA] (ISOFORMS SR5A AND SR5.2)</scope>
    <source>
        <tissue>Venom duct</tissue>
    </source>
</reference>
<reference key="2">
    <citation type="journal article" date="2006" name="Peptides">
        <title>A biologically active hydrophobic T-1-conotoxin from the venom of Conus spurius.</title>
        <authorList>
            <person name="Aguilar M.B."/>
            <person name="Lezama-Monfil L."/>
            <person name="Maillo M."/>
            <person name="Pedraza-Lara H."/>
            <person name="Lopez-Vera E."/>
            <person name="Heimer de la Cotera E.P."/>
        </authorList>
    </citation>
    <scope>PROTEIN SEQUENCE OF 47-59</scope>
    <scope>FUNCTION</scope>
    <scope>SUBCELLULAR LOCATION</scope>
    <scope>MASS SPECTROMETRY</scope>
    <scope>DISULFIDE BONDS</scope>
    <source>
        <tissue>Venom</tissue>
    </source>
</reference>
<reference key="3">
    <citation type="journal article" date="2022" name="Peptides">
        <title>The T-1 conotoxin mu-SrVA from the worm hunting marine snail Conus spurius preferentially blocks the human NaV1.5 channel.</title>
        <authorList>
            <person name="Ruelas-Callejas A."/>
            <person name="Aguilar M.B."/>
            <person name="Arteaga-Tlecuitl R."/>
            <person name="Gomora J.C."/>
            <person name="Lopez-Vera E."/>
        </authorList>
    </citation>
    <scope>FUNCTION</scope>
    <scope>SYNTHESIS OF 47-59</scope>
</reference>
<evidence type="ECO:0000255" key="1"/>
<evidence type="ECO:0000269" key="2">
    <source>
    </source>
</evidence>
<evidence type="ECO:0000269" key="3">
    <source>
    </source>
</evidence>
<evidence type="ECO:0000303" key="4">
    <source>
    </source>
</evidence>
<evidence type="ECO:0000303" key="5">
    <source>
    </source>
</evidence>
<evidence type="ECO:0000303" key="6">
    <source>
    </source>
</evidence>
<evidence type="ECO:0000305" key="7"/>
<evidence type="ECO:0000305" key="8">
    <source>
    </source>
</evidence>
<sequence>MRCLPVFVILLLLIASAPSVDAQLKTKDDVPLASFHDNAKGTQHKRIINWCCLIFYQCC</sequence>
<name>CT5A_CONSP</name>